<comment type="function">
    <text>May be involved in transcriptional regulation.</text>
</comment>
<comment type="subcellular location">
    <subcellularLocation>
        <location evidence="6">Nucleus</location>
    </subcellularLocation>
</comment>
<comment type="alternative products">
    <event type="alternative splicing"/>
    <isoform>
        <id>Q8TF39-1</id>
        <name>1</name>
        <sequence type="displayed"/>
    </isoform>
    <isoform>
        <id>Q8TF39-2</id>
        <name>2</name>
        <sequence type="described" ref="VSP_043023 VSP_043024"/>
    </isoform>
</comment>
<comment type="similarity">
    <text evidence="6">Belongs to the krueppel C2H2-type zinc-finger protein family.</text>
</comment>
<comment type="sequence caution" evidence="6">
    <conflict type="erroneous initiation">
        <sequence resource="EMBL-CDS" id="BAB85548"/>
    </conflict>
</comment>
<name>ZN483_HUMAN</name>
<feature type="chain" id="PRO_0000047610" description="Zinc finger protein 483">
    <location>
        <begin position="1"/>
        <end position="744"/>
    </location>
</feature>
<feature type="domain" description="SCAN box" evidence="3">
    <location>
        <begin position="52"/>
        <end position="134"/>
    </location>
</feature>
<feature type="domain" description="KRAB" evidence="2">
    <location>
        <begin position="170"/>
        <end position="241"/>
    </location>
</feature>
<feature type="zinc finger region" description="C2H2-type 1" evidence="1">
    <location>
        <begin position="439"/>
        <end position="461"/>
    </location>
</feature>
<feature type="zinc finger region" description="C2H2-type 2" evidence="1">
    <location>
        <begin position="467"/>
        <end position="489"/>
    </location>
</feature>
<feature type="zinc finger region" description="C2H2-type 3" evidence="1">
    <location>
        <begin position="495"/>
        <end position="517"/>
    </location>
</feature>
<feature type="zinc finger region" description="C2H2-type 4" evidence="1">
    <location>
        <begin position="523"/>
        <end position="545"/>
    </location>
</feature>
<feature type="zinc finger region" description="C2H2-type 5" evidence="1">
    <location>
        <begin position="551"/>
        <end position="573"/>
    </location>
</feature>
<feature type="zinc finger region" description="C2H2-type 6" evidence="1">
    <location>
        <begin position="579"/>
        <end position="601"/>
    </location>
</feature>
<feature type="zinc finger region" description="C2H2-type 7" evidence="1">
    <location>
        <begin position="607"/>
        <end position="629"/>
    </location>
</feature>
<feature type="zinc finger region" description="C2H2-type 8" evidence="1">
    <location>
        <begin position="635"/>
        <end position="657"/>
    </location>
</feature>
<feature type="zinc finger region" description="C2H2-type 9" evidence="1">
    <location>
        <begin position="663"/>
        <end position="685"/>
    </location>
</feature>
<feature type="zinc finger region" description="C2H2-type 10" evidence="1">
    <location>
        <begin position="691"/>
        <end position="713"/>
    </location>
</feature>
<feature type="zinc finger region" description="C2H2-type 11" evidence="1">
    <location>
        <begin position="719"/>
        <end position="741"/>
    </location>
</feature>
<feature type="region of interest" description="Disordered" evidence="4">
    <location>
        <begin position="137"/>
        <end position="156"/>
    </location>
</feature>
<feature type="region of interest" description="Disordered" evidence="4">
    <location>
        <begin position="263"/>
        <end position="308"/>
    </location>
</feature>
<feature type="region of interest" description="Disordered" evidence="4">
    <location>
        <begin position="350"/>
        <end position="385"/>
    </location>
</feature>
<feature type="compositionally biased region" description="Polar residues" evidence="4">
    <location>
        <begin position="277"/>
        <end position="293"/>
    </location>
</feature>
<feature type="compositionally biased region" description="Basic and acidic residues" evidence="4">
    <location>
        <begin position="298"/>
        <end position="308"/>
    </location>
</feature>
<feature type="compositionally biased region" description="Basic and acidic residues" evidence="4">
    <location>
        <begin position="350"/>
        <end position="363"/>
    </location>
</feature>
<feature type="splice variant" id="VSP_043023" description="In isoform 2." evidence="5">
    <original>ESALDKIIERCLRDD</original>
    <variation>IHGAVKKMQMFSEAE</variation>
    <location>
        <begin position="242"/>
        <end position="256"/>
    </location>
</feature>
<feature type="splice variant" id="VSP_043024" description="In isoform 2." evidence="5">
    <location>
        <begin position="257"/>
        <end position="744"/>
    </location>
</feature>
<feature type="sequence conflict" description="In Ref. 1; BAB85548." evidence="6" ref="1">
    <original>E</original>
    <variation>K</variation>
    <location>
        <position position="436"/>
    </location>
</feature>
<feature type="strand" evidence="7">
    <location>
        <begin position="388"/>
        <end position="391"/>
    </location>
</feature>
<feature type="strand" evidence="7">
    <location>
        <begin position="393"/>
        <end position="395"/>
    </location>
</feature>
<feature type="strand" evidence="7">
    <location>
        <begin position="398"/>
        <end position="400"/>
    </location>
</feature>
<feature type="strand" evidence="7">
    <location>
        <begin position="408"/>
        <end position="410"/>
    </location>
</feature>
<feature type="helix" evidence="7">
    <location>
        <begin position="414"/>
        <end position="418"/>
    </location>
</feature>
<accession>Q8TF39</accession>
<accession>Q5VZN2</accession>
<accession>Q8NAE1</accession>
<protein>
    <recommendedName>
        <fullName>Zinc finger protein 483</fullName>
    </recommendedName>
    <alternativeName>
        <fullName>Zinc finger protein with KRAB and SCAN domains 16</fullName>
    </alternativeName>
</protein>
<dbReference type="EMBL" id="AB075842">
    <property type="protein sequence ID" value="BAB85548.1"/>
    <property type="status" value="ALT_INIT"/>
    <property type="molecule type" value="mRNA"/>
</dbReference>
<dbReference type="EMBL" id="AK092811">
    <property type="protein sequence ID" value="BAC03981.1"/>
    <property type="molecule type" value="mRNA"/>
</dbReference>
<dbReference type="EMBL" id="AK291267">
    <property type="protein sequence ID" value="BAF83956.1"/>
    <property type="molecule type" value="mRNA"/>
</dbReference>
<dbReference type="EMBL" id="AL159168">
    <property type="status" value="NOT_ANNOTATED_CDS"/>
    <property type="molecule type" value="Genomic_DNA"/>
</dbReference>
<dbReference type="EMBL" id="AL135787">
    <property type="status" value="NOT_ANNOTATED_CDS"/>
    <property type="molecule type" value="Genomic_DNA"/>
</dbReference>
<dbReference type="EMBL" id="CH471105">
    <property type="protein sequence ID" value="EAW59073.1"/>
    <property type="molecule type" value="Genomic_DNA"/>
</dbReference>
<dbReference type="EMBL" id="BC136695">
    <property type="protein sequence ID" value="AAI36696.1"/>
    <property type="molecule type" value="mRNA"/>
</dbReference>
<dbReference type="EMBL" id="BC136696">
    <property type="protein sequence ID" value="AAI36697.1"/>
    <property type="molecule type" value="mRNA"/>
</dbReference>
<dbReference type="CCDS" id="CCDS35105.1">
    <molecule id="Q8TF39-2"/>
</dbReference>
<dbReference type="CCDS" id="CCDS35106.1">
    <molecule id="Q8TF39-1"/>
</dbReference>
<dbReference type="RefSeq" id="NP_001007170.1">
    <molecule id="Q8TF39-2"/>
    <property type="nucleotide sequence ID" value="NM_001007169.6"/>
</dbReference>
<dbReference type="RefSeq" id="NP_597721.2">
    <molecule id="Q8TF39-1"/>
    <property type="nucleotide sequence ID" value="NM_133464.5"/>
</dbReference>
<dbReference type="RefSeq" id="XP_011516602.1">
    <molecule id="Q8TF39-1"/>
    <property type="nucleotide sequence ID" value="XM_011518300.3"/>
</dbReference>
<dbReference type="RefSeq" id="XP_016869826.1">
    <molecule id="Q8TF39-1"/>
    <property type="nucleotide sequence ID" value="XM_017014337.2"/>
</dbReference>
<dbReference type="RefSeq" id="XP_016869827.1">
    <molecule id="Q8TF39-1"/>
    <property type="nucleotide sequence ID" value="XM_017014338.2"/>
</dbReference>
<dbReference type="RefSeq" id="XP_047278819.1">
    <molecule id="Q8TF39-1"/>
    <property type="nucleotide sequence ID" value="XM_047422863.1"/>
</dbReference>
<dbReference type="RefSeq" id="XP_047278820.1">
    <molecule id="Q8TF39-2"/>
    <property type="nucleotide sequence ID" value="XM_047422864.1"/>
</dbReference>
<dbReference type="RefSeq" id="XP_054218122.1">
    <molecule id="Q8TF39-1"/>
    <property type="nucleotide sequence ID" value="XM_054362147.1"/>
</dbReference>
<dbReference type="RefSeq" id="XP_054218123.1">
    <molecule id="Q8TF39-1"/>
    <property type="nucleotide sequence ID" value="XM_054362148.1"/>
</dbReference>
<dbReference type="RefSeq" id="XP_054218124.1">
    <molecule id="Q8TF39-1"/>
    <property type="nucleotide sequence ID" value="XM_054362149.1"/>
</dbReference>
<dbReference type="RefSeq" id="XP_054218125.1">
    <molecule id="Q8TF39-1"/>
    <property type="nucleotide sequence ID" value="XM_054362150.1"/>
</dbReference>
<dbReference type="RefSeq" id="XP_054218126.1">
    <molecule id="Q8TF39-2"/>
    <property type="nucleotide sequence ID" value="XM_054362151.1"/>
</dbReference>
<dbReference type="PDB" id="2CTU">
    <property type="method" value="NMR"/>
    <property type="chains" value="A=379-438"/>
</dbReference>
<dbReference type="PDBsum" id="2CTU"/>
<dbReference type="SMR" id="Q8TF39"/>
<dbReference type="BioGRID" id="127677">
    <property type="interactions" value="61"/>
</dbReference>
<dbReference type="FunCoup" id="Q8TF39">
    <property type="interactions" value="340"/>
</dbReference>
<dbReference type="IntAct" id="Q8TF39">
    <property type="interactions" value="46"/>
</dbReference>
<dbReference type="STRING" id="9606.ENSP00000311679"/>
<dbReference type="GlyGen" id="Q8TF39">
    <property type="glycosylation" value="3 sites, 1 O-linked glycan (3 sites)"/>
</dbReference>
<dbReference type="iPTMnet" id="Q8TF39"/>
<dbReference type="PhosphoSitePlus" id="Q8TF39"/>
<dbReference type="BioMuta" id="ZNF483"/>
<dbReference type="DMDM" id="205641226"/>
<dbReference type="jPOST" id="Q8TF39"/>
<dbReference type="MassIVE" id="Q8TF39"/>
<dbReference type="PaxDb" id="9606-ENSP00000311679"/>
<dbReference type="PeptideAtlas" id="Q8TF39"/>
<dbReference type="ProteomicsDB" id="74547">
    <molecule id="Q8TF39-1"/>
</dbReference>
<dbReference type="ProteomicsDB" id="74548">
    <molecule id="Q8TF39-2"/>
</dbReference>
<dbReference type="Pumba" id="Q8TF39"/>
<dbReference type="ABCD" id="Q8TF39">
    <property type="antibodies" value="2 sequenced antibodies"/>
</dbReference>
<dbReference type="Antibodypedia" id="29572">
    <property type="antibodies" value="123 antibodies from 21 providers"/>
</dbReference>
<dbReference type="DNASU" id="158399"/>
<dbReference type="Ensembl" id="ENST00000309235.6">
    <molecule id="Q8TF39-1"/>
    <property type="protein sequence ID" value="ENSP00000311679.5"/>
    <property type="gene ID" value="ENSG00000173258.13"/>
</dbReference>
<dbReference type="Ensembl" id="ENST00000358151.8">
    <molecule id="Q8TF39-2"/>
    <property type="protein sequence ID" value="ENSP00000350871.4"/>
    <property type="gene ID" value="ENSG00000173258.13"/>
</dbReference>
<dbReference type="GeneID" id="158399"/>
<dbReference type="KEGG" id="hsa:158399"/>
<dbReference type="MANE-Select" id="ENST00000309235.6">
    <property type="protein sequence ID" value="ENSP00000311679.5"/>
    <property type="RefSeq nucleotide sequence ID" value="NM_133464.5"/>
    <property type="RefSeq protein sequence ID" value="NP_597721.2"/>
</dbReference>
<dbReference type="UCSC" id="uc004bff.4">
    <molecule id="Q8TF39-1"/>
    <property type="organism name" value="human"/>
</dbReference>
<dbReference type="AGR" id="HGNC:23384"/>
<dbReference type="CTD" id="158399"/>
<dbReference type="DisGeNET" id="158399"/>
<dbReference type="GeneCards" id="ZNF483"/>
<dbReference type="HGNC" id="HGNC:23384">
    <property type="gene designation" value="ZNF483"/>
</dbReference>
<dbReference type="HPA" id="ENSG00000173258">
    <property type="expression patterns" value="Low tissue specificity"/>
</dbReference>
<dbReference type="neXtProt" id="NX_Q8TF39"/>
<dbReference type="OpenTargets" id="ENSG00000173258"/>
<dbReference type="PharmGKB" id="PA134897404"/>
<dbReference type="VEuPathDB" id="HostDB:ENSG00000173258"/>
<dbReference type="eggNOG" id="KOG1721">
    <property type="taxonomic scope" value="Eukaryota"/>
</dbReference>
<dbReference type="GeneTree" id="ENSGT00940000162615"/>
<dbReference type="HOGENOM" id="CLU_002678_49_8_1"/>
<dbReference type="InParanoid" id="Q8TF39"/>
<dbReference type="OMA" id="VPNRKEH"/>
<dbReference type="OrthoDB" id="6077919at2759"/>
<dbReference type="PAN-GO" id="Q8TF39">
    <property type="GO annotations" value="4 GO annotations based on evolutionary models"/>
</dbReference>
<dbReference type="PhylomeDB" id="Q8TF39"/>
<dbReference type="TreeFam" id="TF350807"/>
<dbReference type="PathwayCommons" id="Q8TF39"/>
<dbReference type="Reactome" id="R-HSA-212436">
    <property type="pathway name" value="Generic Transcription Pathway"/>
</dbReference>
<dbReference type="SignaLink" id="Q8TF39"/>
<dbReference type="BioGRID-ORCS" id="158399">
    <property type="hits" value="8 hits in 1170 CRISPR screens"/>
</dbReference>
<dbReference type="ChiTaRS" id="ZNF483">
    <property type="organism name" value="human"/>
</dbReference>
<dbReference type="EvolutionaryTrace" id="Q8TF39"/>
<dbReference type="GenomeRNAi" id="158399"/>
<dbReference type="Pharos" id="Q8TF39">
    <property type="development level" value="Tdark"/>
</dbReference>
<dbReference type="PRO" id="PR:Q8TF39"/>
<dbReference type="Proteomes" id="UP000005640">
    <property type="component" value="Chromosome 9"/>
</dbReference>
<dbReference type="RNAct" id="Q8TF39">
    <property type="molecule type" value="protein"/>
</dbReference>
<dbReference type="Bgee" id="ENSG00000173258">
    <property type="expression patterns" value="Expressed in endothelial cell and 174 other cell types or tissues"/>
</dbReference>
<dbReference type="ExpressionAtlas" id="Q8TF39">
    <property type="expression patterns" value="baseline and differential"/>
</dbReference>
<dbReference type="GO" id="GO:0005634">
    <property type="term" value="C:nucleus"/>
    <property type="evidence" value="ECO:0000318"/>
    <property type="project" value="GO_Central"/>
</dbReference>
<dbReference type="GO" id="GO:0000981">
    <property type="term" value="F:DNA-binding transcription factor activity, RNA polymerase II-specific"/>
    <property type="evidence" value="ECO:0000318"/>
    <property type="project" value="GO_Central"/>
</dbReference>
<dbReference type="GO" id="GO:0000978">
    <property type="term" value="F:RNA polymerase II cis-regulatory region sequence-specific DNA binding"/>
    <property type="evidence" value="ECO:0000318"/>
    <property type="project" value="GO_Central"/>
</dbReference>
<dbReference type="GO" id="GO:0008270">
    <property type="term" value="F:zinc ion binding"/>
    <property type="evidence" value="ECO:0007669"/>
    <property type="project" value="UniProtKB-KW"/>
</dbReference>
<dbReference type="GO" id="GO:0006357">
    <property type="term" value="P:regulation of transcription by RNA polymerase II"/>
    <property type="evidence" value="ECO:0000318"/>
    <property type="project" value="GO_Central"/>
</dbReference>
<dbReference type="CDD" id="cd07765">
    <property type="entry name" value="KRAB_A-box"/>
    <property type="match status" value="1"/>
</dbReference>
<dbReference type="CDD" id="cd07936">
    <property type="entry name" value="SCAN"/>
    <property type="match status" value="1"/>
</dbReference>
<dbReference type="FunFam" id="3.30.160.60:FF:004486">
    <property type="match status" value="1"/>
</dbReference>
<dbReference type="FunFam" id="3.30.160.60:FF:000512">
    <property type="entry name" value="zinc finger protein 197 isoform X1"/>
    <property type="match status" value="1"/>
</dbReference>
<dbReference type="FunFam" id="3.30.160.60:FF:000688">
    <property type="entry name" value="zinc finger protein 197 isoform X1"/>
    <property type="match status" value="1"/>
</dbReference>
<dbReference type="FunFam" id="1.10.4020.10:FF:000001">
    <property type="entry name" value="zinc finger protein 263 isoform X1"/>
    <property type="match status" value="1"/>
</dbReference>
<dbReference type="FunFam" id="3.30.160.60:FF:000608">
    <property type="entry name" value="zinc finger protein 286A isoform X1"/>
    <property type="match status" value="1"/>
</dbReference>
<dbReference type="FunFam" id="3.30.160.60:FF:001501">
    <property type="entry name" value="Zinc finger protein 483"/>
    <property type="match status" value="1"/>
</dbReference>
<dbReference type="FunFam" id="3.30.160.60:FF:001532">
    <property type="entry name" value="Zinc finger protein 483"/>
    <property type="match status" value="1"/>
</dbReference>
<dbReference type="FunFam" id="3.30.160.60:FF:001580">
    <property type="entry name" value="zinc finger protein 483"/>
    <property type="match status" value="1"/>
</dbReference>
<dbReference type="FunFam" id="3.30.160.60:FF:001350">
    <property type="entry name" value="zinc finger protein 483 isoform X1"/>
    <property type="match status" value="1"/>
</dbReference>
<dbReference type="FunFam" id="3.30.160.60:FF:001540">
    <property type="entry name" value="zinc finger protein 483 isoform X2"/>
    <property type="match status" value="1"/>
</dbReference>
<dbReference type="FunFam" id="3.30.160.60:FF:002254">
    <property type="entry name" value="Zinc finger protein 540"/>
    <property type="match status" value="1"/>
</dbReference>
<dbReference type="FunFam" id="3.30.160.60:FF:000785">
    <property type="entry name" value="zinc finger protein 648"/>
    <property type="match status" value="1"/>
</dbReference>
<dbReference type="FunFam" id="3.30.160.60:FF:000099">
    <property type="entry name" value="Zinc finger protein 79"/>
    <property type="match status" value="1"/>
</dbReference>
<dbReference type="Gene3D" id="6.10.140.140">
    <property type="match status" value="1"/>
</dbReference>
<dbReference type="Gene3D" id="3.30.160.60">
    <property type="entry name" value="Classic Zinc Finger"/>
    <property type="match status" value="12"/>
</dbReference>
<dbReference type="Gene3D" id="1.10.4020.10">
    <property type="entry name" value="DNA breaking-rejoining enzymes"/>
    <property type="match status" value="1"/>
</dbReference>
<dbReference type="InterPro" id="IPR050752">
    <property type="entry name" value="C2H2-ZF_domain"/>
</dbReference>
<dbReference type="InterPro" id="IPR001909">
    <property type="entry name" value="KRAB"/>
</dbReference>
<dbReference type="InterPro" id="IPR036051">
    <property type="entry name" value="KRAB_dom_sf"/>
</dbReference>
<dbReference type="InterPro" id="IPR003309">
    <property type="entry name" value="SCAN_dom"/>
</dbReference>
<dbReference type="InterPro" id="IPR038269">
    <property type="entry name" value="SCAN_sf"/>
</dbReference>
<dbReference type="InterPro" id="IPR036236">
    <property type="entry name" value="Znf_C2H2_sf"/>
</dbReference>
<dbReference type="InterPro" id="IPR013087">
    <property type="entry name" value="Znf_C2H2_type"/>
</dbReference>
<dbReference type="PANTHER" id="PTHR24384">
    <property type="entry name" value="FINGER PUTATIVE TRANSCRIPTION FACTOR FAMILY-RELATED"/>
    <property type="match status" value="1"/>
</dbReference>
<dbReference type="PANTHER" id="PTHR24384:SF246">
    <property type="entry name" value="GENE, 19965-RELATED"/>
    <property type="match status" value="1"/>
</dbReference>
<dbReference type="Pfam" id="PF01352">
    <property type="entry name" value="KRAB"/>
    <property type="match status" value="1"/>
</dbReference>
<dbReference type="Pfam" id="PF02023">
    <property type="entry name" value="SCAN"/>
    <property type="match status" value="1"/>
</dbReference>
<dbReference type="Pfam" id="PF00096">
    <property type="entry name" value="zf-C2H2"/>
    <property type="match status" value="10"/>
</dbReference>
<dbReference type="SMART" id="SM00349">
    <property type="entry name" value="KRAB"/>
    <property type="match status" value="1"/>
</dbReference>
<dbReference type="SMART" id="SM00431">
    <property type="entry name" value="SCAN"/>
    <property type="match status" value="1"/>
</dbReference>
<dbReference type="SMART" id="SM00355">
    <property type="entry name" value="ZnF_C2H2"/>
    <property type="match status" value="11"/>
</dbReference>
<dbReference type="SUPFAM" id="SSF57667">
    <property type="entry name" value="beta-beta-alpha zinc fingers"/>
    <property type="match status" value="6"/>
</dbReference>
<dbReference type="SUPFAM" id="SSF109640">
    <property type="entry name" value="KRAB domain (Kruppel-associated box)"/>
    <property type="match status" value="1"/>
</dbReference>
<dbReference type="SUPFAM" id="SSF47353">
    <property type="entry name" value="Retrovirus capsid dimerization domain-like"/>
    <property type="match status" value="1"/>
</dbReference>
<dbReference type="PROSITE" id="PS50805">
    <property type="entry name" value="KRAB"/>
    <property type="match status" value="1"/>
</dbReference>
<dbReference type="PROSITE" id="PS50804">
    <property type="entry name" value="SCAN_BOX"/>
    <property type="match status" value="1"/>
</dbReference>
<dbReference type="PROSITE" id="PS00028">
    <property type="entry name" value="ZINC_FINGER_C2H2_1"/>
    <property type="match status" value="11"/>
</dbReference>
<dbReference type="PROSITE" id="PS50157">
    <property type="entry name" value="ZINC_FINGER_C2H2_2"/>
    <property type="match status" value="11"/>
</dbReference>
<reference key="1">
    <citation type="journal article" date="2001" name="DNA Res.">
        <title>Prediction of the coding sequences of unidentified human genes. XXII. The complete sequences of 50 new cDNA clones which code for large proteins.</title>
        <authorList>
            <person name="Nagase T."/>
            <person name="Kikuno R."/>
            <person name="Ohara O."/>
        </authorList>
    </citation>
    <scope>NUCLEOTIDE SEQUENCE [LARGE SCALE MRNA] (ISOFORM 1)</scope>
    <source>
        <tissue>Brain</tissue>
    </source>
</reference>
<reference key="2">
    <citation type="journal article" date="2004" name="Nat. Genet.">
        <title>Complete sequencing and characterization of 21,243 full-length human cDNAs.</title>
        <authorList>
            <person name="Ota T."/>
            <person name="Suzuki Y."/>
            <person name="Nishikawa T."/>
            <person name="Otsuki T."/>
            <person name="Sugiyama T."/>
            <person name="Irie R."/>
            <person name="Wakamatsu A."/>
            <person name="Hayashi K."/>
            <person name="Sato H."/>
            <person name="Nagai K."/>
            <person name="Kimura K."/>
            <person name="Makita H."/>
            <person name="Sekine M."/>
            <person name="Obayashi M."/>
            <person name="Nishi T."/>
            <person name="Shibahara T."/>
            <person name="Tanaka T."/>
            <person name="Ishii S."/>
            <person name="Yamamoto J."/>
            <person name="Saito K."/>
            <person name="Kawai Y."/>
            <person name="Isono Y."/>
            <person name="Nakamura Y."/>
            <person name="Nagahari K."/>
            <person name="Murakami K."/>
            <person name="Yasuda T."/>
            <person name="Iwayanagi T."/>
            <person name="Wagatsuma M."/>
            <person name="Shiratori A."/>
            <person name="Sudo H."/>
            <person name="Hosoiri T."/>
            <person name="Kaku Y."/>
            <person name="Kodaira H."/>
            <person name="Kondo H."/>
            <person name="Sugawara M."/>
            <person name="Takahashi M."/>
            <person name="Kanda K."/>
            <person name="Yokoi T."/>
            <person name="Furuya T."/>
            <person name="Kikkawa E."/>
            <person name="Omura Y."/>
            <person name="Abe K."/>
            <person name="Kamihara K."/>
            <person name="Katsuta N."/>
            <person name="Sato K."/>
            <person name="Tanikawa M."/>
            <person name="Yamazaki M."/>
            <person name="Ninomiya K."/>
            <person name="Ishibashi T."/>
            <person name="Yamashita H."/>
            <person name="Murakawa K."/>
            <person name="Fujimori K."/>
            <person name="Tanai H."/>
            <person name="Kimata M."/>
            <person name="Watanabe M."/>
            <person name="Hiraoka S."/>
            <person name="Chiba Y."/>
            <person name="Ishida S."/>
            <person name="Ono Y."/>
            <person name="Takiguchi S."/>
            <person name="Watanabe S."/>
            <person name="Yosida M."/>
            <person name="Hotuta T."/>
            <person name="Kusano J."/>
            <person name="Kanehori K."/>
            <person name="Takahashi-Fujii A."/>
            <person name="Hara H."/>
            <person name="Tanase T.-O."/>
            <person name="Nomura Y."/>
            <person name="Togiya S."/>
            <person name="Komai F."/>
            <person name="Hara R."/>
            <person name="Takeuchi K."/>
            <person name="Arita M."/>
            <person name="Imose N."/>
            <person name="Musashino K."/>
            <person name="Yuuki H."/>
            <person name="Oshima A."/>
            <person name="Sasaki N."/>
            <person name="Aotsuka S."/>
            <person name="Yoshikawa Y."/>
            <person name="Matsunawa H."/>
            <person name="Ichihara T."/>
            <person name="Shiohata N."/>
            <person name="Sano S."/>
            <person name="Moriya S."/>
            <person name="Momiyama H."/>
            <person name="Satoh N."/>
            <person name="Takami S."/>
            <person name="Terashima Y."/>
            <person name="Suzuki O."/>
            <person name="Nakagawa S."/>
            <person name="Senoh A."/>
            <person name="Mizoguchi H."/>
            <person name="Goto Y."/>
            <person name="Shimizu F."/>
            <person name="Wakebe H."/>
            <person name="Hishigaki H."/>
            <person name="Watanabe T."/>
            <person name="Sugiyama A."/>
            <person name="Takemoto M."/>
            <person name="Kawakami B."/>
            <person name="Yamazaki M."/>
            <person name="Watanabe K."/>
            <person name="Kumagai A."/>
            <person name="Itakura S."/>
            <person name="Fukuzumi Y."/>
            <person name="Fujimori Y."/>
            <person name="Komiyama M."/>
            <person name="Tashiro H."/>
            <person name="Tanigami A."/>
            <person name="Fujiwara T."/>
            <person name="Ono T."/>
            <person name="Yamada K."/>
            <person name="Fujii Y."/>
            <person name="Ozaki K."/>
            <person name="Hirao M."/>
            <person name="Ohmori Y."/>
            <person name="Kawabata A."/>
            <person name="Hikiji T."/>
            <person name="Kobatake N."/>
            <person name="Inagaki H."/>
            <person name="Ikema Y."/>
            <person name="Okamoto S."/>
            <person name="Okitani R."/>
            <person name="Kawakami T."/>
            <person name="Noguchi S."/>
            <person name="Itoh T."/>
            <person name="Shigeta K."/>
            <person name="Senba T."/>
            <person name="Matsumura K."/>
            <person name="Nakajima Y."/>
            <person name="Mizuno T."/>
            <person name="Morinaga M."/>
            <person name="Sasaki M."/>
            <person name="Togashi T."/>
            <person name="Oyama M."/>
            <person name="Hata H."/>
            <person name="Watanabe M."/>
            <person name="Komatsu T."/>
            <person name="Mizushima-Sugano J."/>
            <person name="Satoh T."/>
            <person name="Shirai Y."/>
            <person name="Takahashi Y."/>
            <person name="Nakagawa K."/>
            <person name="Okumura K."/>
            <person name="Nagase T."/>
            <person name="Nomura N."/>
            <person name="Kikuchi H."/>
            <person name="Masuho Y."/>
            <person name="Yamashita R."/>
            <person name="Nakai K."/>
            <person name="Yada T."/>
            <person name="Nakamura Y."/>
            <person name="Ohara O."/>
            <person name="Isogai T."/>
            <person name="Sugano S."/>
        </authorList>
    </citation>
    <scope>NUCLEOTIDE SEQUENCE [LARGE SCALE MRNA] (ISOFORMS 1 AND 2)</scope>
    <source>
        <tissue>Small intestine</tissue>
    </source>
</reference>
<reference key="3">
    <citation type="journal article" date="2004" name="Nature">
        <title>DNA sequence and analysis of human chromosome 9.</title>
        <authorList>
            <person name="Humphray S.J."/>
            <person name="Oliver K."/>
            <person name="Hunt A.R."/>
            <person name="Plumb R.W."/>
            <person name="Loveland J.E."/>
            <person name="Howe K.L."/>
            <person name="Andrews T.D."/>
            <person name="Searle S."/>
            <person name="Hunt S.E."/>
            <person name="Scott C.E."/>
            <person name="Jones M.C."/>
            <person name="Ainscough R."/>
            <person name="Almeida J.P."/>
            <person name="Ambrose K.D."/>
            <person name="Ashwell R.I.S."/>
            <person name="Babbage A.K."/>
            <person name="Babbage S."/>
            <person name="Bagguley C.L."/>
            <person name="Bailey J."/>
            <person name="Banerjee R."/>
            <person name="Barker D.J."/>
            <person name="Barlow K.F."/>
            <person name="Bates K."/>
            <person name="Beasley H."/>
            <person name="Beasley O."/>
            <person name="Bird C.P."/>
            <person name="Bray-Allen S."/>
            <person name="Brown A.J."/>
            <person name="Brown J.Y."/>
            <person name="Burford D."/>
            <person name="Burrill W."/>
            <person name="Burton J."/>
            <person name="Carder C."/>
            <person name="Carter N.P."/>
            <person name="Chapman J.C."/>
            <person name="Chen Y."/>
            <person name="Clarke G."/>
            <person name="Clark S.Y."/>
            <person name="Clee C.M."/>
            <person name="Clegg S."/>
            <person name="Collier R.E."/>
            <person name="Corby N."/>
            <person name="Crosier M."/>
            <person name="Cummings A.T."/>
            <person name="Davies J."/>
            <person name="Dhami P."/>
            <person name="Dunn M."/>
            <person name="Dutta I."/>
            <person name="Dyer L.W."/>
            <person name="Earthrowl M.E."/>
            <person name="Faulkner L."/>
            <person name="Fleming C.J."/>
            <person name="Frankish A."/>
            <person name="Frankland J.A."/>
            <person name="French L."/>
            <person name="Fricker D.G."/>
            <person name="Garner P."/>
            <person name="Garnett J."/>
            <person name="Ghori J."/>
            <person name="Gilbert J.G.R."/>
            <person name="Glison C."/>
            <person name="Grafham D.V."/>
            <person name="Gribble S."/>
            <person name="Griffiths C."/>
            <person name="Griffiths-Jones S."/>
            <person name="Grocock R."/>
            <person name="Guy J."/>
            <person name="Hall R.E."/>
            <person name="Hammond S."/>
            <person name="Harley J.L."/>
            <person name="Harrison E.S.I."/>
            <person name="Hart E.A."/>
            <person name="Heath P.D."/>
            <person name="Henderson C.D."/>
            <person name="Hopkins B.L."/>
            <person name="Howard P.J."/>
            <person name="Howden P.J."/>
            <person name="Huckle E."/>
            <person name="Johnson C."/>
            <person name="Johnson D."/>
            <person name="Joy A.A."/>
            <person name="Kay M."/>
            <person name="Keenan S."/>
            <person name="Kershaw J.K."/>
            <person name="Kimberley A.M."/>
            <person name="King A."/>
            <person name="Knights A."/>
            <person name="Laird G.K."/>
            <person name="Langford C."/>
            <person name="Lawlor S."/>
            <person name="Leongamornlert D.A."/>
            <person name="Leversha M."/>
            <person name="Lloyd C."/>
            <person name="Lloyd D.M."/>
            <person name="Lovell J."/>
            <person name="Martin S."/>
            <person name="Mashreghi-Mohammadi M."/>
            <person name="Matthews L."/>
            <person name="McLaren S."/>
            <person name="McLay K.E."/>
            <person name="McMurray A."/>
            <person name="Milne S."/>
            <person name="Nickerson T."/>
            <person name="Nisbett J."/>
            <person name="Nordsiek G."/>
            <person name="Pearce A.V."/>
            <person name="Peck A.I."/>
            <person name="Porter K.M."/>
            <person name="Pandian R."/>
            <person name="Pelan S."/>
            <person name="Phillimore B."/>
            <person name="Povey S."/>
            <person name="Ramsey Y."/>
            <person name="Rand V."/>
            <person name="Scharfe M."/>
            <person name="Sehra H.K."/>
            <person name="Shownkeen R."/>
            <person name="Sims S.K."/>
            <person name="Skuce C.D."/>
            <person name="Smith M."/>
            <person name="Steward C.A."/>
            <person name="Swarbreck D."/>
            <person name="Sycamore N."/>
            <person name="Tester J."/>
            <person name="Thorpe A."/>
            <person name="Tracey A."/>
            <person name="Tromans A."/>
            <person name="Thomas D.W."/>
            <person name="Wall M."/>
            <person name="Wallis J.M."/>
            <person name="West A.P."/>
            <person name="Whitehead S.L."/>
            <person name="Willey D.L."/>
            <person name="Williams S.A."/>
            <person name="Wilming L."/>
            <person name="Wray P.W."/>
            <person name="Young L."/>
            <person name="Ashurst J.L."/>
            <person name="Coulson A."/>
            <person name="Blocker H."/>
            <person name="Durbin R.M."/>
            <person name="Sulston J.E."/>
            <person name="Hubbard T."/>
            <person name="Jackson M.J."/>
            <person name="Bentley D.R."/>
            <person name="Beck S."/>
            <person name="Rogers J."/>
            <person name="Dunham I."/>
        </authorList>
    </citation>
    <scope>NUCLEOTIDE SEQUENCE [LARGE SCALE GENOMIC DNA]</scope>
</reference>
<reference key="4">
    <citation type="submission" date="2005-07" db="EMBL/GenBank/DDBJ databases">
        <authorList>
            <person name="Mural R.J."/>
            <person name="Istrail S."/>
            <person name="Sutton G.G."/>
            <person name="Florea L."/>
            <person name="Halpern A.L."/>
            <person name="Mobarry C.M."/>
            <person name="Lippert R."/>
            <person name="Walenz B."/>
            <person name="Shatkay H."/>
            <person name="Dew I."/>
            <person name="Miller J.R."/>
            <person name="Flanigan M.J."/>
            <person name="Edwards N.J."/>
            <person name="Bolanos R."/>
            <person name="Fasulo D."/>
            <person name="Halldorsson B.V."/>
            <person name="Hannenhalli S."/>
            <person name="Turner R."/>
            <person name="Yooseph S."/>
            <person name="Lu F."/>
            <person name="Nusskern D.R."/>
            <person name="Shue B.C."/>
            <person name="Zheng X.H."/>
            <person name="Zhong F."/>
            <person name="Delcher A.L."/>
            <person name="Huson D.H."/>
            <person name="Kravitz S.A."/>
            <person name="Mouchard L."/>
            <person name="Reinert K."/>
            <person name="Remington K.A."/>
            <person name="Clark A.G."/>
            <person name="Waterman M.S."/>
            <person name="Eichler E.E."/>
            <person name="Adams M.D."/>
            <person name="Hunkapiller M.W."/>
            <person name="Myers E.W."/>
            <person name="Venter J.C."/>
        </authorList>
    </citation>
    <scope>NUCLEOTIDE SEQUENCE [LARGE SCALE GENOMIC DNA]</scope>
</reference>
<reference key="5">
    <citation type="journal article" date="2004" name="Genome Res.">
        <title>The status, quality, and expansion of the NIH full-length cDNA project: the Mammalian Gene Collection (MGC).</title>
        <authorList>
            <consortium name="The MGC Project Team"/>
        </authorList>
    </citation>
    <scope>NUCLEOTIDE SEQUENCE [LARGE SCALE MRNA] (ISOFORM 1)</scope>
</reference>
<reference key="6">
    <citation type="journal article" date="2011" name="Sci. Signal.">
        <title>System-wide temporal characterization of the proteome and phosphoproteome of human embryonic stem cell differentiation.</title>
        <authorList>
            <person name="Rigbolt K.T."/>
            <person name="Prokhorova T.A."/>
            <person name="Akimov V."/>
            <person name="Henningsen J."/>
            <person name="Johansen P.T."/>
            <person name="Kratchmarova I."/>
            <person name="Kassem M."/>
            <person name="Mann M."/>
            <person name="Olsen J.V."/>
            <person name="Blagoev B."/>
        </authorList>
    </citation>
    <scope>IDENTIFICATION BY MASS SPECTROMETRY [LARGE SCALE ANALYSIS]</scope>
</reference>
<reference key="7">
    <citation type="journal article" date="2014" name="J. Proteomics">
        <title>An enzyme assisted RP-RPLC approach for in-depth analysis of human liver phosphoproteome.</title>
        <authorList>
            <person name="Bian Y."/>
            <person name="Song C."/>
            <person name="Cheng K."/>
            <person name="Dong M."/>
            <person name="Wang F."/>
            <person name="Huang J."/>
            <person name="Sun D."/>
            <person name="Wang L."/>
            <person name="Ye M."/>
            <person name="Zou H."/>
        </authorList>
    </citation>
    <scope>IDENTIFICATION BY MASS SPECTROMETRY [LARGE SCALE ANALYSIS]</scope>
    <source>
        <tissue>Liver</tissue>
    </source>
</reference>
<reference key="8">
    <citation type="submission" date="2005-11" db="PDB data bank">
        <title>Solution structure of zinc finger domain from human zinc finger protein 483.</title>
        <authorList>
            <consortium name="RIKEN structural genomics initiative (RSGI)"/>
        </authorList>
    </citation>
    <scope>STRUCTURE BY NMR OF 379-438</scope>
</reference>
<sequence>MQAVVPLNKMTAISPEPQTLASTEQNEVPRVVTSGEQEAILRGNAADAESFRQRFRWFCYSEVAGPRKALSQLWELCNQWLRPDIHTKEQILELLVFEQFLTILPGEIRIWVKSQHPESSEEVVTLIEDLTQMLEEKDPVSQDSTVSQEENSKEDKMVTVCPNTESCESITLKDVAVNFSRGEWKKLEPFQKELYKEVLLENLRNLEFLDFPVSKLELISQLKWVELPWLLEEVSKSSRLDESALDKIIERCLRDDDHGLMEESQQYCGSSEEDHGNQGNSKGRVAQNKTLGSGSRGKKFDPDKSPFGHNFKETSDLIKHLRVYLRKKSRRYNESKKPFSFHSDLVLNRKEKTAGEKSRKSNDGGKVLSHSSALTEHQKRQKIHLGDRSQKCSKCGIIFIRRSTLSRRKTPMCEKCRKDSCQEAALNKDEGNESGEKTHKCSKCGKAFGYSASLTKHRRIHTGEKPYMCNECGKAFSDSSSLTPHHRTHSGEKPFKCDDCGKGFTLSAHLIKHQRIHTGEKPYKCKDCGRPFSDSSSLIQHQRIHTGEKPYTCSNCGKSFSHSSSLSKHQRIHTGEKPYKCGECGKAFRQNSCLTRHQRIHTGEKPYLCNDCGMTFSHFTSVIYHQRLHSGEKPYKCNQCEKAFPTHSLLSRHQRIHTGVKPYKCKECGKSFSQSSSLNEHHRIHTGEKPYECNYCGATFSRSSILVEHLKIHTGRREYECNECEKTFKSNSGLIRHRGFHSAE</sequence>
<evidence type="ECO:0000255" key="1">
    <source>
        <dbReference type="PROSITE-ProRule" id="PRU00042"/>
    </source>
</evidence>
<evidence type="ECO:0000255" key="2">
    <source>
        <dbReference type="PROSITE-ProRule" id="PRU00119"/>
    </source>
</evidence>
<evidence type="ECO:0000255" key="3">
    <source>
        <dbReference type="PROSITE-ProRule" id="PRU00187"/>
    </source>
</evidence>
<evidence type="ECO:0000256" key="4">
    <source>
        <dbReference type="SAM" id="MobiDB-lite"/>
    </source>
</evidence>
<evidence type="ECO:0000303" key="5">
    <source>
    </source>
</evidence>
<evidence type="ECO:0000305" key="6"/>
<evidence type="ECO:0007829" key="7">
    <source>
        <dbReference type="PDB" id="2CTU"/>
    </source>
</evidence>
<keyword id="KW-0002">3D-structure</keyword>
<keyword id="KW-0025">Alternative splicing</keyword>
<keyword id="KW-0238">DNA-binding</keyword>
<keyword id="KW-0479">Metal-binding</keyword>
<keyword id="KW-0539">Nucleus</keyword>
<keyword id="KW-1267">Proteomics identification</keyword>
<keyword id="KW-1185">Reference proteome</keyword>
<keyword id="KW-0677">Repeat</keyword>
<keyword id="KW-0804">Transcription</keyword>
<keyword id="KW-0805">Transcription regulation</keyword>
<keyword id="KW-0862">Zinc</keyword>
<keyword id="KW-0863">Zinc-finger</keyword>
<gene>
    <name type="primary">ZNF483</name>
    <name type="synonym">KIAA1962</name>
    <name type="synonym">ZKSCAN16</name>
</gene>
<organism>
    <name type="scientific">Homo sapiens</name>
    <name type="common">Human</name>
    <dbReference type="NCBI Taxonomy" id="9606"/>
    <lineage>
        <taxon>Eukaryota</taxon>
        <taxon>Metazoa</taxon>
        <taxon>Chordata</taxon>
        <taxon>Craniata</taxon>
        <taxon>Vertebrata</taxon>
        <taxon>Euteleostomi</taxon>
        <taxon>Mammalia</taxon>
        <taxon>Eutheria</taxon>
        <taxon>Euarchontoglires</taxon>
        <taxon>Primates</taxon>
        <taxon>Haplorrhini</taxon>
        <taxon>Catarrhini</taxon>
        <taxon>Hominidae</taxon>
        <taxon>Homo</taxon>
    </lineage>
</organism>
<proteinExistence type="evidence at protein level"/>